<proteinExistence type="evidence at transcript level"/>
<keyword id="KW-0256">Endoplasmic reticulum</keyword>
<keyword id="KW-0434">Leukotriene biosynthesis</keyword>
<keyword id="KW-0472">Membrane</keyword>
<keyword id="KW-0539">Nucleus</keyword>
<keyword id="KW-1185">Reference proteome</keyword>
<keyword id="KW-0812">Transmembrane</keyword>
<keyword id="KW-1133">Transmembrane helix</keyword>
<accession>P30354</accession>
<sequence length="153" mass="17276">MDQETVGNVVLLAIVTLISVVQNGFFAHKVEHESRTQNGRSFQRTGTLAFERVYTANQNCVDAYPTFLAVLWSAGLLCSQVPAAFAGLMYLLVRQKYFVGYLGERTQSTPGYIFGKRIILFLFLMSVAGIFNYYLIFFFGSDFENYIKTVTTT</sequence>
<comment type="function">
    <text evidence="1">Required for leukotriene biosynthesis by ALOX5 (5-lipoxygenase). Anchors ALOX5 to the membrane. Binds arachidonic acid, and could play an essential role in the transfer of arachidonic acid to ALOX5. Binds to MK-886, a compound that blocks the biosynthesis of leukotrienes (By similarity).</text>
</comment>
<comment type="subunit">
    <text evidence="1">Homotrimer. Interacts with LTC4S and ALOX5 (By similarity).</text>
</comment>
<comment type="subcellular location">
    <subcellularLocation>
        <location evidence="1">Nucleus membrane</location>
        <topology evidence="1">Multi-pass membrane protein</topology>
    </subcellularLocation>
    <subcellularLocation>
        <location evidence="1">Endoplasmic reticulum membrane</location>
        <topology evidence="1">Multi-pass membrane protein</topology>
    </subcellularLocation>
</comment>
<comment type="domain">
    <text evidence="1">The C-terminal part after residue 140 is mostly disordered.</text>
</comment>
<comment type="similarity">
    <text evidence="2">Belongs to the MAPEG family.</text>
</comment>
<evidence type="ECO:0000250" key="1"/>
<evidence type="ECO:0000305" key="2"/>
<dbReference type="EMBL" id="M96553">
    <property type="protein sequence ID" value="AAA36843.1"/>
    <property type="molecule type" value="mRNA"/>
</dbReference>
<dbReference type="SMR" id="P30354"/>
<dbReference type="STRING" id="9544.ENSMMUP00000007360"/>
<dbReference type="PaxDb" id="9544-ENSMMUP00000007360"/>
<dbReference type="eggNOG" id="ENOG502RZJB">
    <property type="taxonomic scope" value="Eukaryota"/>
</dbReference>
<dbReference type="HOGENOM" id="CLU_110291_0_0_1"/>
<dbReference type="InParanoid" id="P30354"/>
<dbReference type="Proteomes" id="UP000006718">
    <property type="component" value="Unassembled WGS sequence"/>
</dbReference>
<dbReference type="GO" id="GO:0005783">
    <property type="term" value="C:endoplasmic reticulum"/>
    <property type="evidence" value="ECO:0000318"/>
    <property type="project" value="GO_Central"/>
</dbReference>
<dbReference type="GO" id="GO:0005789">
    <property type="term" value="C:endoplasmic reticulum membrane"/>
    <property type="evidence" value="ECO:0007669"/>
    <property type="project" value="UniProtKB-SubCell"/>
</dbReference>
<dbReference type="GO" id="GO:0005635">
    <property type="term" value="C:nuclear envelope"/>
    <property type="evidence" value="ECO:0000250"/>
    <property type="project" value="UniProtKB"/>
</dbReference>
<dbReference type="GO" id="GO:0031965">
    <property type="term" value="C:nuclear membrane"/>
    <property type="evidence" value="ECO:0000250"/>
    <property type="project" value="UniProtKB"/>
</dbReference>
<dbReference type="GO" id="GO:0050544">
    <property type="term" value="F:arachidonate binding"/>
    <property type="evidence" value="ECO:0000250"/>
    <property type="project" value="UniProtKB"/>
</dbReference>
<dbReference type="GO" id="GO:0008047">
    <property type="term" value="F:enzyme activator activity"/>
    <property type="evidence" value="ECO:0007669"/>
    <property type="project" value="InterPro"/>
</dbReference>
<dbReference type="GO" id="GO:0004602">
    <property type="term" value="F:glutathione peroxidase activity"/>
    <property type="evidence" value="ECO:0000318"/>
    <property type="project" value="GO_Central"/>
</dbReference>
<dbReference type="GO" id="GO:0004364">
    <property type="term" value="F:glutathione transferase activity"/>
    <property type="evidence" value="ECO:0000318"/>
    <property type="project" value="GO_Central"/>
</dbReference>
<dbReference type="GO" id="GO:0004464">
    <property type="term" value="F:leukotriene-C4 synthase activity"/>
    <property type="evidence" value="ECO:0000318"/>
    <property type="project" value="GO_Central"/>
</dbReference>
<dbReference type="GO" id="GO:0019370">
    <property type="term" value="P:leukotriene biosynthetic process"/>
    <property type="evidence" value="ECO:0000318"/>
    <property type="project" value="GO_Central"/>
</dbReference>
<dbReference type="FunFam" id="1.20.120.550:FF:000003">
    <property type="entry name" value="Leukotriene C4 synthase"/>
    <property type="match status" value="1"/>
</dbReference>
<dbReference type="Gene3D" id="1.20.120.550">
    <property type="entry name" value="Membrane associated eicosanoid/glutathione metabolism-like domain"/>
    <property type="match status" value="1"/>
</dbReference>
<dbReference type="InterPro" id="IPR001446">
    <property type="entry name" value="5_LipOase_AP"/>
</dbReference>
<dbReference type="InterPro" id="IPR018295">
    <property type="entry name" value="FLAP/GST2/LTC4S_CS"/>
</dbReference>
<dbReference type="InterPro" id="IPR050997">
    <property type="entry name" value="MAPEG"/>
</dbReference>
<dbReference type="InterPro" id="IPR023352">
    <property type="entry name" value="MAPEG-like_dom_sf"/>
</dbReference>
<dbReference type="InterPro" id="IPR001129">
    <property type="entry name" value="Membr-assoc_MAPEG"/>
</dbReference>
<dbReference type="PANTHER" id="PTHR10250:SF2">
    <property type="entry name" value="ARACHIDONATE 5-LIPOXYGENASE-ACTIVATING PROTEIN"/>
    <property type="match status" value="1"/>
</dbReference>
<dbReference type="PANTHER" id="PTHR10250">
    <property type="entry name" value="MICROSOMAL GLUTATHIONE S-TRANSFERASE"/>
    <property type="match status" value="1"/>
</dbReference>
<dbReference type="Pfam" id="PF01124">
    <property type="entry name" value="MAPEG"/>
    <property type="match status" value="1"/>
</dbReference>
<dbReference type="PRINTS" id="PR00488">
    <property type="entry name" value="5LPOXGNASEAP"/>
</dbReference>
<dbReference type="SUPFAM" id="SSF161084">
    <property type="entry name" value="MAPEG domain-like"/>
    <property type="match status" value="1"/>
</dbReference>
<dbReference type="PROSITE" id="PS01297">
    <property type="entry name" value="FLAP_GST2_LTC4S"/>
    <property type="match status" value="1"/>
</dbReference>
<protein>
    <recommendedName>
        <fullName>Arachidonate 5-lipoxygenase-activating protein</fullName>
    </recommendedName>
    <alternativeName>
        <fullName>FLAP</fullName>
    </alternativeName>
    <alternativeName>
        <fullName>MK-886-binding protein</fullName>
    </alternativeName>
</protein>
<name>AL5AP_MACMU</name>
<organism>
    <name type="scientific">Macaca mulatta</name>
    <name type="common">Rhesus macaque</name>
    <dbReference type="NCBI Taxonomy" id="9544"/>
    <lineage>
        <taxon>Eukaryota</taxon>
        <taxon>Metazoa</taxon>
        <taxon>Chordata</taxon>
        <taxon>Craniata</taxon>
        <taxon>Vertebrata</taxon>
        <taxon>Euteleostomi</taxon>
        <taxon>Mammalia</taxon>
        <taxon>Eutheria</taxon>
        <taxon>Euarchontoglires</taxon>
        <taxon>Primates</taxon>
        <taxon>Haplorrhini</taxon>
        <taxon>Catarrhini</taxon>
        <taxon>Cercopithecidae</taxon>
        <taxon>Cercopithecinae</taxon>
        <taxon>Macaca</taxon>
    </lineage>
</organism>
<feature type="chain" id="PRO_0000217752" description="Arachidonate 5-lipoxygenase-activating protein">
    <location>
        <begin position="1"/>
        <end position="153" status="greater than"/>
    </location>
</feature>
<feature type="topological domain" description="Lumenal" evidence="1">
    <location>
        <begin position="1"/>
        <end position="8"/>
    </location>
</feature>
<feature type="transmembrane region" description="Helical" evidence="1">
    <location>
        <begin position="9"/>
        <end position="30"/>
    </location>
</feature>
<feature type="topological domain" description="Cytoplasmic" evidence="1">
    <location>
        <begin position="31"/>
        <end position="52"/>
    </location>
</feature>
<feature type="transmembrane region" description="Helical" evidence="1">
    <location>
        <begin position="53"/>
        <end position="77"/>
    </location>
</feature>
<feature type="topological domain" description="Lumenal" evidence="1">
    <location>
        <begin position="78"/>
        <end position="80"/>
    </location>
</feature>
<feature type="transmembrane region" description="Helical" evidence="1">
    <location>
        <begin position="81"/>
        <end position="102"/>
    </location>
</feature>
<feature type="topological domain" description="Cytoplasmic" evidence="1">
    <location>
        <begin position="103"/>
        <end position="107"/>
    </location>
</feature>
<feature type="intramembrane region" evidence="1">
    <location>
        <begin position="108"/>
        <end position="115"/>
    </location>
</feature>
<feature type="transmembrane region" description="Helical" evidence="1">
    <location>
        <begin position="116"/>
        <end position="128"/>
    </location>
</feature>
<feature type="topological domain" description="Lumenal" evidence="1">
    <location>
        <begin position="129"/>
        <end position="153"/>
    </location>
</feature>
<feature type="non-terminal residue">
    <location>
        <position position="153"/>
    </location>
</feature>
<reference key="1">
    <citation type="journal article" date="1992" name="Mol. Pharmacol.">
        <title>Cross-species comparison of 5-lipoxygenase-activating protein.</title>
        <authorList>
            <person name="Vickers P.J."/>
            <person name="O'Neill G.P."/>
            <person name="Mancini J.A."/>
            <person name="Charleson S."/>
            <person name="Abramovitz M."/>
        </authorList>
    </citation>
    <scope>NUCLEOTIDE SEQUENCE [MRNA]</scope>
</reference>
<gene>
    <name type="primary">ALOX5AP</name>
    <name type="synonym">FLAP</name>
</gene>